<dbReference type="EC" id="2.5.1.47"/>
<dbReference type="UniPathway" id="UPA00136">
    <property type="reaction ID" value="UER00200"/>
</dbReference>
<dbReference type="GO" id="GO:0004124">
    <property type="term" value="F:cysteine synthase activity"/>
    <property type="evidence" value="ECO:0007669"/>
    <property type="project" value="UniProtKB-EC"/>
</dbReference>
<comment type="catalytic activity">
    <reaction>
        <text>O-acetyl-L-serine + hydrogen sulfide = L-cysteine + acetate</text>
        <dbReference type="Rhea" id="RHEA:14829"/>
        <dbReference type="ChEBI" id="CHEBI:29919"/>
        <dbReference type="ChEBI" id="CHEBI:30089"/>
        <dbReference type="ChEBI" id="CHEBI:35235"/>
        <dbReference type="ChEBI" id="CHEBI:58340"/>
        <dbReference type="EC" id="2.5.1.47"/>
    </reaction>
</comment>
<comment type="cofactor">
    <cofactor evidence="1">
        <name>pyridoxal 5'-phosphate</name>
        <dbReference type="ChEBI" id="CHEBI:597326"/>
    </cofactor>
</comment>
<comment type="pathway">
    <text>Amino-acid biosynthesis; L-cysteine biosynthesis; L-cysteine from L-serine: step 2/2.</text>
</comment>
<comment type="subunit">
    <text evidence="1">Homodimer.</text>
</comment>
<comment type="similarity">
    <text evidence="2">Belongs to the cysteine synthase/cystathionine beta-synthase family.</text>
</comment>
<accession>P81340</accession>
<reference key="1">
    <citation type="journal article" date="1998" name="Electrophoresis">
        <title>Two-dimensional gel electrophoresis separation and N-terminal sequence analysis of proteins from Clostridium pasteurianum W5.</title>
        <authorList>
            <person name="Flengsrud R."/>
            <person name="Skjeldal L."/>
        </authorList>
    </citation>
    <scope>PROTEIN SEQUENCE</scope>
    <source>
        <strain>ATCC 6013 / DSM 525 / NCIB 9486 / VKM B-1774 / W5</strain>
    </source>
</reference>
<organism>
    <name type="scientific">Clostridium pasteurianum</name>
    <dbReference type="NCBI Taxonomy" id="1501"/>
    <lineage>
        <taxon>Bacteria</taxon>
        <taxon>Bacillati</taxon>
        <taxon>Bacillota</taxon>
        <taxon>Clostridia</taxon>
        <taxon>Eubacteriales</taxon>
        <taxon>Clostridiaceae</taxon>
        <taxon>Clostridium</taxon>
    </lineage>
</organism>
<evidence type="ECO:0000250" key="1"/>
<evidence type="ECO:0000305" key="2"/>
<name>CYSK_CLOPA</name>
<gene>
    <name type="primary">cysK</name>
</gene>
<sequence>NVTELIGNTPLVELI</sequence>
<protein>
    <recommendedName>
        <fullName>Cysteine synthase</fullName>
        <shortName>CSase</shortName>
        <ecNumber>2.5.1.47</ecNumber>
    </recommendedName>
    <alternativeName>
        <fullName>CP 27</fullName>
    </alternativeName>
    <alternativeName>
        <fullName>O-acetylserine (thiol)-lyase</fullName>
        <shortName>OAS-TL</shortName>
    </alternativeName>
    <alternativeName>
        <fullName>O-acetylserine sulfhydrylase</fullName>
    </alternativeName>
</protein>
<keyword id="KW-0028">Amino-acid biosynthesis</keyword>
<keyword id="KW-0198">Cysteine biosynthesis</keyword>
<keyword id="KW-0903">Direct protein sequencing</keyword>
<keyword id="KW-0663">Pyridoxal phosphate</keyword>
<keyword id="KW-0808">Transferase</keyword>
<proteinExistence type="evidence at protein level"/>
<feature type="chain" id="PRO_0000167085" description="Cysteine synthase">
    <location>
        <begin position="1"/>
        <end position="15" status="greater than"/>
    </location>
</feature>
<feature type="non-terminal residue">
    <location>
        <position position="15"/>
    </location>
</feature>